<evidence type="ECO:0000250" key="1"/>
<evidence type="ECO:0000250" key="2">
    <source>
        <dbReference type="UniProtKB" id="Q99PG4"/>
    </source>
</evidence>
<evidence type="ECO:0000250" key="3">
    <source>
        <dbReference type="UniProtKB" id="Q9NS28"/>
    </source>
</evidence>
<evidence type="ECO:0000255" key="4">
    <source>
        <dbReference type="PROSITE-ProRule" id="PRU00171"/>
    </source>
</evidence>
<evidence type="ECO:0007744" key="5">
    <source>
    </source>
</evidence>
<feature type="chain" id="PRO_0000342605" description="Regulator of G-protein signaling 18">
    <location>
        <begin position="1"/>
        <end position="235"/>
    </location>
</feature>
<feature type="domain" description="RGS" evidence="4">
    <location>
        <begin position="86"/>
        <end position="202"/>
    </location>
</feature>
<feature type="modified residue" description="Phosphoserine" evidence="3">
    <location>
        <position position="49"/>
    </location>
</feature>
<feature type="modified residue" description="Phosphoserine" evidence="2">
    <location>
        <position position="216"/>
    </location>
</feature>
<feature type="modified residue" description="Phosphoserine" evidence="5">
    <location>
        <position position="218"/>
    </location>
</feature>
<sequence length="235" mass="27645">MDMSLVFFSHLNMCESKEKTFFKLMHGSGKEETNIEAKIRAKEKRNRLSLLLQRPDFHGETHTSRSALLAKETRVSSEEALKWAESFDKLLSHRDGVDAFTRFLKTEFSEENIEFWVACEDFKKCTEPQQLILKAKSIYEKFIKNDAPKEVNLDFHTKEVITKSIAQPTLHSFDAAQSRVCQLMEHDSYKRFLKSEIYLHLIEGRPQRPTNLRRRSRSFTYNEFQDVKSDVAIWL</sequence>
<organism>
    <name type="scientific">Rattus norvegicus</name>
    <name type="common">Rat</name>
    <dbReference type="NCBI Taxonomy" id="10116"/>
    <lineage>
        <taxon>Eukaryota</taxon>
        <taxon>Metazoa</taxon>
        <taxon>Chordata</taxon>
        <taxon>Craniata</taxon>
        <taxon>Vertebrata</taxon>
        <taxon>Euteleostomi</taxon>
        <taxon>Mammalia</taxon>
        <taxon>Eutheria</taxon>
        <taxon>Euarchontoglires</taxon>
        <taxon>Glires</taxon>
        <taxon>Rodentia</taxon>
        <taxon>Myomorpha</taxon>
        <taxon>Muroidea</taxon>
        <taxon>Muridae</taxon>
        <taxon>Murinae</taxon>
        <taxon>Rattus</taxon>
    </lineage>
</organism>
<name>RGS18_RAT</name>
<accession>Q4L0E8</accession>
<comment type="function">
    <text evidence="1">Inhibits signal transduction by increasing the GTPase activity of G protein alpha subunits thereby driving them into their inactive GDP-bound form. Binds to G(i) alpha-1, G(i) alpha-2, G(i) alpha-3 and G(q) alpha (By similarity).</text>
</comment>
<comment type="subcellular location">
    <subcellularLocation>
        <location evidence="1">Cytoplasm</location>
    </subcellularLocation>
</comment>
<gene>
    <name type="primary">Rgs18</name>
</gene>
<reference key="1">
    <citation type="journal article" date="2005" name="Immunology">
        <title>Expression of regulator of G protein signalling proteins in natural killer cells, and their modulation by Ly49A and Ly49D.</title>
        <authorList>
            <person name="Kveberg L."/>
            <person name="Ryan J.C."/>
            <person name="Rolstad B."/>
            <person name="Inngjerdingen M."/>
        </authorList>
    </citation>
    <scope>NUCLEOTIDE SEQUENCE [MRNA]</scope>
    <source>
        <strain>Fischer 344</strain>
    </source>
</reference>
<reference key="2">
    <citation type="journal article" date="2012" name="Nat. Commun.">
        <title>Quantitative maps of protein phosphorylation sites across 14 different rat organs and tissues.</title>
        <authorList>
            <person name="Lundby A."/>
            <person name="Secher A."/>
            <person name="Lage K."/>
            <person name="Nordsborg N.B."/>
            <person name="Dmytriyev A."/>
            <person name="Lundby C."/>
            <person name="Olsen J.V."/>
        </authorList>
    </citation>
    <scope>PHOSPHORYLATION [LARGE SCALE ANALYSIS] AT SER-218</scope>
    <scope>IDENTIFICATION BY MASS SPECTROMETRY [LARGE SCALE ANALYSIS]</scope>
</reference>
<dbReference type="EMBL" id="AY651776">
    <property type="protein sequence ID" value="AAV85503.1"/>
    <property type="molecule type" value="mRNA"/>
</dbReference>
<dbReference type="RefSeq" id="NP_001040549.1">
    <property type="nucleotide sequence ID" value="NM_001047084.1"/>
</dbReference>
<dbReference type="SMR" id="Q4L0E8"/>
<dbReference type="FunCoup" id="Q4L0E8">
    <property type="interactions" value="109"/>
</dbReference>
<dbReference type="STRING" id="10116.ENSRNOP00000005324"/>
<dbReference type="iPTMnet" id="Q4L0E8"/>
<dbReference type="PhosphoSitePlus" id="Q4L0E8"/>
<dbReference type="PaxDb" id="10116-ENSRNOP00000005324"/>
<dbReference type="GeneID" id="289076"/>
<dbReference type="KEGG" id="rno:289076"/>
<dbReference type="UCSC" id="RGD:1306522">
    <property type="organism name" value="rat"/>
</dbReference>
<dbReference type="AGR" id="RGD:1306522"/>
<dbReference type="CTD" id="64407"/>
<dbReference type="RGD" id="1306522">
    <property type="gene designation" value="Rgs18"/>
</dbReference>
<dbReference type="eggNOG" id="KOG3589">
    <property type="taxonomic scope" value="Eukaryota"/>
</dbReference>
<dbReference type="InParanoid" id="Q4L0E8"/>
<dbReference type="PhylomeDB" id="Q4L0E8"/>
<dbReference type="Reactome" id="R-RNO-416476">
    <property type="pathway name" value="G alpha (q) signalling events"/>
</dbReference>
<dbReference type="Reactome" id="R-RNO-418594">
    <property type="pathway name" value="G alpha (i) signalling events"/>
</dbReference>
<dbReference type="PRO" id="PR:Q4L0E8"/>
<dbReference type="Proteomes" id="UP000002494">
    <property type="component" value="Unplaced"/>
</dbReference>
<dbReference type="GO" id="GO:0005737">
    <property type="term" value="C:cytoplasm"/>
    <property type="evidence" value="ECO:0000266"/>
    <property type="project" value="RGD"/>
</dbReference>
<dbReference type="GO" id="GO:0005096">
    <property type="term" value="F:GTPase activator activity"/>
    <property type="evidence" value="ECO:0000266"/>
    <property type="project" value="RGD"/>
</dbReference>
<dbReference type="GO" id="GO:0007186">
    <property type="term" value="P:G protein-coupled receptor signaling pathway"/>
    <property type="evidence" value="ECO:0000266"/>
    <property type="project" value="RGD"/>
</dbReference>
<dbReference type="GO" id="GO:0009968">
    <property type="term" value="P:negative regulation of signal transduction"/>
    <property type="evidence" value="ECO:0007669"/>
    <property type="project" value="UniProtKB-KW"/>
</dbReference>
<dbReference type="GO" id="GO:0008277">
    <property type="term" value="P:regulation of G protein-coupled receptor signaling pathway"/>
    <property type="evidence" value="ECO:0000266"/>
    <property type="project" value="RGD"/>
</dbReference>
<dbReference type="FunFam" id="1.10.167.10:FF:000001">
    <property type="entry name" value="Putative regulator of g-protein signaling 12"/>
    <property type="match status" value="1"/>
</dbReference>
<dbReference type="FunFam" id="1.10.196.10:FF:000001">
    <property type="entry name" value="Regulator of G-protein signaling 8"/>
    <property type="match status" value="1"/>
</dbReference>
<dbReference type="Gene3D" id="1.10.196.10">
    <property type="match status" value="1"/>
</dbReference>
<dbReference type="Gene3D" id="1.10.167.10">
    <property type="entry name" value="Regulator of G-protein Signalling 4, domain 2"/>
    <property type="match status" value="1"/>
</dbReference>
<dbReference type="InterPro" id="IPR016137">
    <property type="entry name" value="RGS"/>
</dbReference>
<dbReference type="InterPro" id="IPR036305">
    <property type="entry name" value="RGS_sf"/>
</dbReference>
<dbReference type="InterPro" id="IPR024066">
    <property type="entry name" value="RGS_subdom1/3"/>
</dbReference>
<dbReference type="InterPro" id="IPR044926">
    <property type="entry name" value="RGS_subdomain_2"/>
</dbReference>
<dbReference type="PANTHER" id="PTHR10845">
    <property type="entry name" value="REGULATOR OF G PROTEIN SIGNALING"/>
    <property type="match status" value="1"/>
</dbReference>
<dbReference type="PANTHER" id="PTHR10845:SF155">
    <property type="entry name" value="REGULATOR OF G-PROTEIN SIGNALING 18"/>
    <property type="match status" value="1"/>
</dbReference>
<dbReference type="Pfam" id="PF00615">
    <property type="entry name" value="RGS"/>
    <property type="match status" value="1"/>
</dbReference>
<dbReference type="PRINTS" id="PR01301">
    <property type="entry name" value="RGSPROTEIN"/>
</dbReference>
<dbReference type="SMART" id="SM00315">
    <property type="entry name" value="RGS"/>
    <property type="match status" value="1"/>
</dbReference>
<dbReference type="SUPFAM" id="SSF48097">
    <property type="entry name" value="Regulator of G-protein signaling, RGS"/>
    <property type="match status" value="1"/>
</dbReference>
<dbReference type="PROSITE" id="PS50132">
    <property type="entry name" value="RGS"/>
    <property type="match status" value="1"/>
</dbReference>
<keyword id="KW-0963">Cytoplasm</keyword>
<keyword id="KW-0597">Phosphoprotein</keyword>
<keyword id="KW-1185">Reference proteome</keyword>
<keyword id="KW-0734">Signal transduction inhibitor</keyword>
<protein>
    <recommendedName>
        <fullName>Regulator of G-protein signaling 18</fullName>
        <shortName>RGS18</shortName>
    </recommendedName>
</protein>
<proteinExistence type="evidence at protein level"/>